<gene>
    <name evidence="1" type="primary">lacG</name>
    <name type="ordered locus">SPy_1916</name>
    <name type="ordered locus">M5005_Spy1632</name>
</gene>
<organism>
    <name type="scientific">Streptococcus pyogenes serotype M1</name>
    <dbReference type="NCBI Taxonomy" id="301447"/>
    <lineage>
        <taxon>Bacteria</taxon>
        <taxon>Bacillati</taxon>
        <taxon>Bacillota</taxon>
        <taxon>Bacilli</taxon>
        <taxon>Lactobacillales</taxon>
        <taxon>Streptococcaceae</taxon>
        <taxon>Streptococcus</taxon>
    </lineage>
</organism>
<accession>Q99Y18</accession>
<accession>Q48WM5</accession>
<evidence type="ECO:0000255" key="1">
    <source>
        <dbReference type="HAMAP-Rule" id="MF_01574"/>
    </source>
</evidence>
<evidence type="ECO:0000305" key="2"/>
<comment type="catalytic activity">
    <reaction evidence="1">
        <text>a 6-phospho-beta-D-galactoside + H2O = D-galactose 6-phosphate + an alcohol</text>
        <dbReference type="Rhea" id="RHEA:24568"/>
        <dbReference type="ChEBI" id="CHEBI:15377"/>
        <dbReference type="ChEBI" id="CHEBI:30879"/>
        <dbReference type="ChEBI" id="CHEBI:58534"/>
        <dbReference type="ChEBI" id="CHEBI:91004"/>
        <dbReference type="EC" id="3.2.1.85"/>
    </reaction>
</comment>
<comment type="pathway">
    <text evidence="1">Carbohydrate metabolism; lactose degradation; D-galactose 6-phosphate and beta-D-glucose from lactose 6-phosphate: step 1/1.</text>
</comment>
<comment type="similarity">
    <text evidence="1">Belongs to the glycosyl hydrolase 1 family.</text>
</comment>
<comment type="sequence caution" evidence="2">
    <conflict type="erroneous initiation">
        <sequence resource="EMBL-CDS" id="AAZ52250"/>
    </conflict>
</comment>
<sequence>MTKTLPKDFIFGGATAAYQAEGATHTDGKGPVAWDKYLEDNYWYTAEPASDFYNRYPVDLKLSEEFGVNGIRISIAWSRIFPTGKGEVNPKGVEYYHNLFAECHKRHVEPFVTLHHFDTPEALHSDGDFLNRENIEHFVNYAEFCFKEFSEVNYWTTFNEIGPIGDGQYLVGKFPPGIQYDLAKVFQSHHNMMVSHARAVKLFKDSGYSGEIGVVHALPTKYPFDANNPDDVRAAELEDIIHNKFILDATYLGKYSDKTMEGVNHILEVNGGELDLREEDFAALDAAKDLNDFLGINYYMSDWMQAFDGETEIIHNGKGEKGSSKYQIKGVGRRKAPVDVPKTDWDWIIFPQGLYDQIMRVKADYPNYKKIYITENGLGYKDEFVDNTVYDGGRIDYVKKHLEVISDAISDGANVKGYFMWSLMDVFSWSNGYEKRYGLFYVDFETQERYPKKSAYWYKKVAETQVIE</sequence>
<protein>
    <recommendedName>
        <fullName evidence="1">6-phospho-beta-galactosidase</fullName>
        <ecNumber evidence="1">3.2.1.85</ecNumber>
    </recommendedName>
    <alternativeName>
        <fullName evidence="1">Beta-D-phosphogalactoside galactohydrolase</fullName>
        <shortName evidence="1">PGALase</shortName>
    </alternativeName>
    <alternativeName>
        <fullName evidence="1">P-beta-Gal</fullName>
        <shortName evidence="1">PBG</shortName>
    </alternativeName>
</protein>
<name>LACG_STRP1</name>
<keyword id="KW-0326">Glycosidase</keyword>
<keyword id="KW-0378">Hydrolase</keyword>
<keyword id="KW-1185">Reference proteome</keyword>
<proteinExistence type="inferred from homology"/>
<dbReference type="EC" id="3.2.1.85" evidence="1"/>
<dbReference type="EMBL" id="AE004092">
    <property type="protein sequence ID" value="AAK34620.1"/>
    <property type="molecule type" value="Genomic_DNA"/>
</dbReference>
<dbReference type="EMBL" id="CP000017">
    <property type="protein sequence ID" value="AAZ52250.1"/>
    <property type="status" value="ALT_INIT"/>
    <property type="molecule type" value="Genomic_DNA"/>
</dbReference>
<dbReference type="RefSeq" id="NP_269899.1">
    <property type="nucleotide sequence ID" value="NC_002737.2"/>
</dbReference>
<dbReference type="SMR" id="Q99Y18"/>
<dbReference type="CAZy" id="GH1">
    <property type="family name" value="Glycoside Hydrolase Family 1"/>
</dbReference>
<dbReference type="PaxDb" id="1314-HKU360_01755"/>
<dbReference type="KEGG" id="spy:SPy_1916"/>
<dbReference type="KEGG" id="spz:M5005_Spy1632"/>
<dbReference type="PATRIC" id="fig|160490.10.peg.1665"/>
<dbReference type="HOGENOM" id="CLU_001859_1_3_9"/>
<dbReference type="OMA" id="YQIEGHG"/>
<dbReference type="UniPathway" id="UPA00542">
    <property type="reaction ID" value="UER00605"/>
</dbReference>
<dbReference type="Proteomes" id="UP000000750">
    <property type="component" value="Chromosome"/>
</dbReference>
<dbReference type="GO" id="GO:0005829">
    <property type="term" value="C:cytosol"/>
    <property type="evidence" value="ECO:0007669"/>
    <property type="project" value="TreeGrafter"/>
</dbReference>
<dbReference type="GO" id="GO:0033920">
    <property type="term" value="F:6-phospho-beta-galactosidase activity"/>
    <property type="evidence" value="ECO:0007669"/>
    <property type="project" value="UniProtKB-UniRule"/>
</dbReference>
<dbReference type="GO" id="GO:0008422">
    <property type="term" value="F:beta-glucosidase activity"/>
    <property type="evidence" value="ECO:0007669"/>
    <property type="project" value="TreeGrafter"/>
</dbReference>
<dbReference type="GO" id="GO:0019512">
    <property type="term" value="P:lactose catabolic process via tagatose-6-phosphate"/>
    <property type="evidence" value="ECO:0007669"/>
    <property type="project" value="InterPro"/>
</dbReference>
<dbReference type="FunFam" id="3.20.20.80:FF:000004">
    <property type="entry name" value="Beta-glucosidase 6-phospho-beta-glucosidase"/>
    <property type="match status" value="1"/>
</dbReference>
<dbReference type="Gene3D" id="3.20.20.80">
    <property type="entry name" value="Glycosidases"/>
    <property type="match status" value="1"/>
</dbReference>
<dbReference type="HAMAP" id="MF_01574">
    <property type="entry name" value="LacG"/>
    <property type="match status" value="1"/>
</dbReference>
<dbReference type="InterPro" id="IPR005928">
    <property type="entry name" value="6P-beta-galactosidase"/>
</dbReference>
<dbReference type="InterPro" id="IPR001360">
    <property type="entry name" value="Glyco_hydro_1"/>
</dbReference>
<dbReference type="InterPro" id="IPR018120">
    <property type="entry name" value="Glyco_hydro_1_AS"/>
</dbReference>
<dbReference type="InterPro" id="IPR033132">
    <property type="entry name" value="Glyco_hydro_1_N_CS"/>
</dbReference>
<dbReference type="InterPro" id="IPR017853">
    <property type="entry name" value="Glycoside_hydrolase_SF"/>
</dbReference>
<dbReference type="NCBIfam" id="TIGR01233">
    <property type="entry name" value="lacG"/>
    <property type="match status" value="1"/>
</dbReference>
<dbReference type="NCBIfam" id="NF010036">
    <property type="entry name" value="PRK13511.1"/>
    <property type="match status" value="1"/>
</dbReference>
<dbReference type="PANTHER" id="PTHR10353">
    <property type="entry name" value="GLYCOSYL HYDROLASE"/>
    <property type="match status" value="1"/>
</dbReference>
<dbReference type="PANTHER" id="PTHR10353:SF36">
    <property type="entry name" value="LP05116P"/>
    <property type="match status" value="1"/>
</dbReference>
<dbReference type="Pfam" id="PF00232">
    <property type="entry name" value="Glyco_hydro_1"/>
    <property type="match status" value="1"/>
</dbReference>
<dbReference type="PRINTS" id="PR00131">
    <property type="entry name" value="GLHYDRLASE1"/>
</dbReference>
<dbReference type="SUPFAM" id="SSF51445">
    <property type="entry name" value="(Trans)glycosidases"/>
    <property type="match status" value="1"/>
</dbReference>
<dbReference type="PROSITE" id="PS00572">
    <property type="entry name" value="GLYCOSYL_HYDROL_F1_1"/>
    <property type="match status" value="1"/>
</dbReference>
<dbReference type="PROSITE" id="PS00653">
    <property type="entry name" value="GLYCOSYL_HYDROL_F1_2"/>
    <property type="match status" value="1"/>
</dbReference>
<feature type="chain" id="PRO_0000260734" description="6-phospho-beta-galactosidase">
    <location>
        <begin position="1"/>
        <end position="468"/>
    </location>
</feature>
<feature type="active site" description="Proton donor" evidence="1">
    <location>
        <position position="160"/>
    </location>
</feature>
<feature type="active site" description="Nucleophile" evidence="1">
    <location>
        <position position="375"/>
    </location>
</feature>
<feature type="binding site" evidence="1">
    <location>
        <position position="19"/>
    </location>
    <ligand>
        <name>D-galactose 6-phosphate</name>
        <dbReference type="ChEBI" id="CHEBI:91004"/>
    </ligand>
</feature>
<feature type="binding site" evidence="1">
    <location>
        <position position="116"/>
    </location>
    <ligand>
        <name>D-galactose 6-phosphate</name>
        <dbReference type="ChEBI" id="CHEBI:91004"/>
    </ligand>
</feature>
<feature type="binding site" evidence="1">
    <location>
        <position position="159"/>
    </location>
    <ligand>
        <name>D-galactose 6-phosphate</name>
        <dbReference type="ChEBI" id="CHEBI:91004"/>
    </ligand>
</feature>
<feature type="binding site" evidence="1">
    <location>
        <position position="160"/>
    </location>
    <ligand>
        <name>D-galactose 6-phosphate</name>
        <dbReference type="ChEBI" id="CHEBI:91004"/>
    </ligand>
</feature>
<feature type="binding site" evidence="1">
    <location>
        <position position="297"/>
    </location>
    <ligand>
        <name>D-galactose 6-phosphate</name>
        <dbReference type="ChEBI" id="CHEBI:91004"/>
    </ligand>
</feature>
<feature type="binding site" evidence="1">
    <location>
        <position position="428"/>
    </location>
    <ligand>
        <name>D-galactose 6-phosphate</name>
        <dbReference type="ChEBI" id="CHEBI:91004"/>
    </ligand>
</feature>
<feature type="binding site" evidence="1">
    <location>
        <position position="429"/>
    </location>
    <ligand>
        <name>D-galactose 6-phosphate</name>
        <dbReference type="ChEBI" id="CHEBI:91004"/>
    </ligand>
</feature>
<feature type="binding site" evidence="1">
    <location>
        <position position="435"/>
    </location>
    <ligand>
        <name>D-galactose 6-phosphate</name>
        <dbReference type="ChEBI" id="CHEBI:91004"/>
    </ligand>
</feature>
<feature type="binding site" evidence="1">
    <location>
        <position position="437"/>
    </location>
    <ligand>
        <name>D-galactose 6-phosphate</name>
        <dbReference type="ChEBI" id="CHEBI:91004"/>
    </ligand>
</feature>
<reference key="1">
    <citation type="journal article" date="2001" name="Proc. Natl. Acad. Sci. U.S.A.">
        <title>Complete genome sequence of an M1 strain of Streptococcus pyogenes.</title>
        <authorList>
            <person name="Ferretti J.J."/>
            <person name="McShan W.M."/>
            <person name="Ajdic D.J."/>
            <person name="Savic D.J."/>
            <person name="Savic G."/>
            <person name="Lyon K."/>
            <person name="Primeaux C."/>
            <person name="Sezate S."/>
            <person name="Suvorov A.N."/>
            <person name="Kenton S."/>
            <person name="Lai H.S."/>
            <person name="Lin S.P."/>
            <person name="Qian Y."/>
            <person name="Jia H.G."/>
            <person name="Najar F.Z."/>
            <person name="Ren Q."/>
            <person name="Zhu H."/>
            <person name="Song L."/>
            <person name="White J."/>
            <person name="Yuan X."/>
            <person name="Clifton S.W."/>
            <person name="Roe B.A."/>
            <person name="McLaughlin R.E."/>
        </authorList>
    </citation>
    <scope>NUCLEOTIDE SEQUENCE [LARGE SCALE GENOMIC DNA]</scope>
    <source>
        <strain>ATCC 700294 / SF370 / Serotype M1</strain>
    </source>
</reference>
<reference key="2">
    <citation type="journal article" date="2005" name="J. Infect. Dis.">
        <title>Evolutionary origin and emergence of a highly successful clone of serotype M1 group A Streptococcus involved multiple horizontal gene transfer events.</title>
        <authorList>
            <person name="Sumby P."/>
            <person name="Porcella S.F."/>
            <person name="Madrigal A.G."/>
            <person name="Barbian K.D."/>
            <person name="Virtaneva K."/>
            <person name="Ricklefs S.M."/>
            <person name="Sturdevant D.E."/>
            <person name="Graham M.R."/>
            <person name="Vuopio-Varkila J."/>
            <person name="Hoe N.P."/>
            <person name="Musser J.M."/>
        </authorList>
    </citation>
    <scope>NUCLEOTIDE SEQUENCE [LARGE SCALE GENOMIC DNA]</scope>
    <source>
        <strain>ATCC BAA-947 / MGAS5005 / Serotype M1</strain>
    </source>
</reference>